<keyword id="KW-0010">Activator</keyword>
<keyword id="KW-0963">Cytoplasm</keyword>
<keyword id="KW-0238">DNA-binding</keyword>
<keyword id="KW-1185">Reference proteome</keyword>
<keyword id="KW-0677">Repeat</keyword>
<keyword id="KW-0684">Rhamnose metabolism</keyword>
<keyword id="KW-0804">Transcription</keyword>
<keyword id="KW-0805">Transcription regulation</keyword>
<feature type="chain" id="PRO_1000087599" description="HTH-type transcriptional activator RhaS">
    <location>
        <begin position="1"/>
        <end position="278"/>
    </location>
</feature>
<feature type="domain" description="HTH araC/xylS-type" evidence="1">
    <location>
        <begin position="174"/>
        <end position="272"/>
    </location>
</feature>
<feature type="DNA-binding region" description="H-T-H motif" evidence="1">
    <location>
        <begin position="191"/>
        <end position="212"/>
    </location>
</feature>
<feature type="DNA-binding region" description="H-T-H motif" evidence="1">
    <location>
        <begin position="239"/>
        <end position="262"/>
    </location>
</feature>
<feature type="site" description="Interaction with sigma-70" evidence="1">
    <location>
        <position position="241"/>
    </location>
</feature>
<feature type="site" description="Interaction with sigma-70" evidence="1">
    <location>
        <position position="250"/>
    </location>
</feature>
<organism>
    <name type="scientific">Salmonella arizonae (strain ATCC BAA-731 / CDC346-86 / RSK2980)</name>
    <dbReference type="NCBI Taxonomy" id="41514"/>
    <lineage>
        <taxon>Bacteria</taxon>
        <taxon>Pseudomonadati</taxon>
        <taxon>Pseudomonadota</taxon>
        <taxon>Gammaproteobacteria</taxon>
        <taxon>Enterobacterales</taxon>
        <taxon>Enterobacteriaceae</taxon>
        <taxon>Salmonella</taxon>
    </lineage>
</organism>
<accession>A9MI64</accession>
<gene>
    <name evidence="1" type="primary">rhaS</name>
    <name type="ordered locus">SARI_03598</name>
</gene>
<name>RHAS_SALAR</name>
<protein>
    <recommendedName>
        <fullName evidence="1">HTH-type transcriptional activator RhaS</fullName>
    </recommendedName>
    <alternativeName>
        <fullName evidence="1">L-rhamnose operon regulatory protein RhaS</fullName>
    </alternativeName>
</protein>
<comment type="function">
    <text evidence="1">Activates expression of the rhaBAD and rhaT operons.</text>
</comment>
<comment type="subunit">
    <text evidence="1">Binds DNA as a dimer.</text>
</comment>
<comment type="subcellular location">
    <subcellularLocation>
        <location evidence="1">Cytoplasm</location>
    </subcellularLocation>
</comment>
<reference key="1">
    <citation type="submission" date="2007-11" db="EMBL/GenBank/DDBJ databases">
        <authorList>
            <consortium name="The Salmonella enterica serovar Arizonae Genome Sequencing Project"/>
            <person name="McClelland M."/>
            <person name="Sanderson E.K."/>
            <person name="Porwollik S."/>
            <person name="Spieth J."/>
            <person name="Clifton W.S."/>
            <person name="Fulton R."/>
            <person name="Chunyan W."/>
            <person name="Wollam A."/>
            <person name="Shah N."/>
            <person name="Pepin K."/>
            <person name="Bhonagiri V."/>
            <person name="Nash W."/>
            <person name="Johnson M."/>
            <person name="Thiruvilangam P."/>
            <person name="Wilson R."/>
        </authorList>
    </citation>
    <scope>NUCLEOTIDE SEQUENCE [LARGE SCALE GENOMIC DNA]</scope>
    <source>
        <strain>ATCC BAA-731 / CDC346-86 / RSK2980</strain>
    </source>
</reference>
<proteinExistence type="inferred from homology"/>
<sequence length="278" mass="32074">MTVLHSVDFFPSGKAPVAIEPRLPQAAFPEHHHDFHEIVIVEHGTGIHVFNGQPYTISGGTVCFVRDHDRHLYEHTDNLCLTNVLWRSPEAFQFLAGLEQLLPQEQDGYYPSHWRVNQSALQQVRQLVGLMERAGDGMDAPAVANREILFMQLLVLLRRSSLMEGATDNDAKLNQLMAWLEDHFAEEVCWEAVAEQFSLSLRTLHRQLKQHTGLTPQRYLNRLRLIKARHLLRHSDHSVTEIAYRCGFGDSNHFSTLFRREFNWSPRDIRQGRDAIPQ</sequence>
<dbReference type="EMBL" id="CP000880">
    <property type="protein sequence ID" value="ABX23410.1"/>
    <property type="molecule type" value="Genomic_DNA"/>
</dbReference>
<dbReference type="SMR" id="A9MI64"/>
<dbReference type="STRING" id="41514.SARI_03598"/>
<dbReference type="KEGG" id="ses:SARI_03598"/>
<dbReference type="HOGENOM" id="CLU_000445_88_5_6"/>
<dbReference type="Proteomes" id="UP000002084">
    <property type="component" value="Chromosome"/>
</dbReference>
<dbReference type="GO" id="GO:0005737">
    <property type="term" value="C:cytoplasm"/>
    <property type="evidence" value="ECO:0007669"/>
    <property type="project" value="UniProtKB-SubCell"/>
</dbReference>
<dbReference type="GO" id="GO:0003700">
    <property type="term" value="F:DNA-binding transcription factor activity"/>
    <property type="evidence" value="ECO:0007669"/>
    <property type="project" value="UniProtKB-UniRule"/>
</dbReference>
<dbReference type="GO" id="GO:0043565">
    <property type="term" value="F:sequence-specific DNA binding"/>
    <property type="evidence" value="ECO:0007669"/>
    <property type="project" value="InterPro"/>
</dbReference>
<dbReference type="GO" id="GO:0045893">
    <property type="term" value="P:positive regulation of DNA-templated transcription"/>
    <property type="evidence" value="ECO:0007669"/>
    <property type="project" value="UniProtKB-UniRule"/>
</dbReference>
<dbReference type="GO" id="GO:0019299">
    <property type="term" value="P:rhamnose metabolic process"/>
    <property type="evidence" value="ECO:0007669"/>
    <property type="project" value="UniProtKB-UniRule"/>
</dbReference>
<dbReference type="CDD" id="cd06977">
    <property type="entry name" value="cupin_RhaR_RhaS-like_N"/>
    <property type="match status" value="1"/>
</dbReference>
<dbReference type="Gene3D" id="1.10.10.60">
    <property type="entry name" value="Homeodomain-like"/>
    <property type="match status" value="1"/>
</dbReference>
<dbReference type="Gene3D" id="2.60.120.10">
    <property type="entry name" value="Jelly Rolls"/>
    <property type="match status" value="1"/>
</dbReference>
<dbReference type="HAMAP" id="MF_01534">
    <property type="entry name" value="HTH_type_RhaS"/>
    <property type="match status" value="1"/>
</dbReference>
<dbReference type="InterPro" id="IPR003313">
    <property type="entry name" value="AraC-bd"/>
</dbReference>
<dbReference type="InterPro" id="IPR050204">
    <property type="entry name" value="AraC_XylS_family_regulators"/>
</dbReference>
<dbReference type="InterPro" id="IPR009057">
    <property type="entry name" value="Homeodomain-like_sf"/>
</dbReference>
<dbReference type="InterPro" id="IPR037923">
    <property type="entry name" value="HTH-like"/>
</dbReference>
<dbReference type="InterPro" id="IPR018060">
    <property type="entry name" value="HTH_AraC"/>
</dbReference>
<dbReference type="InterPro" id="IPR018062">
    <property type="entry name" value="HTH_AraC-typ_CS"/>
</dbReference>
<dbReference type="InterPro" id="IPR047220">
    <property type="entry name" value="RhaR_RhaS-like_N"/>
</dbReference>
<dbReference type="InterPro" id="IPR014710">
    <property type="entry name" value="RmlC-like_jellyroll"/>
</dbReference>
<dbReference type="InterPro" id="IPR020449">
    <property type="entry name" value="Tscrpt_reg_AraC-type_HTH"/>
</dbReference>
<dbReference type="InterPro" id="IPR023609">
    <property type="entry name" value="Tscrpt_reg_HTH_RhaS"/>
</dbReference>
<dbReference type="NCBIfam" id="NF010028">
    <property type="entry name" value="PRK13503.1"/>
    <property type="match status" value="1"/>
</dbReference>
<dbReference type="PANTHER" id="PTHR46796:SF13">
    <property type="entry name" value="HTH-TYPE TRANSCRIPTIONAL ACTIVATOR RHAS"/>
    <property type="match status" value="1"/>
</dbReference>
<dbReference type="PANTHER" id="PTHR46796">
    <property type="entry name" value="HTH-TYPE TRANSCRIPTIONAL ACTIVATOR RHAS-RELATED"/>
    <property type="match status" value="1"/>
</dbReference>
<dbReference type="Pfam" id="PF02311">
    <property type="entry name" value="AraC_binding"/>
    <property type="match status" value="1"/>
</dbReference>
<dbReference type="Pfam" id="PF12833">
    <property type="entry name" value="HTH_18"/>
    <property type="match status" value="1"/>
</dbReference>
<dbReference type="PRINTS" id="PR00032">
    <property type="entry name" value="HTHARAC"/>
</dbReference>
<dbReference type="SMART" id="SM00342">
    <property type="entry name" value="HTH_ARAC"/>
    <property type="match status" value="1"/>
</dbReference>
<dbReference type="SUPFAM" id="SSF46689">
    <property type="entry name" value="Homeodomain-like"/>
    <property type="match status" value="2"/>
</dbReference>
<dbReference type="SUPFAM" id="SSF51215">
    <property type="entry name" value="Regulatory protein AraC"/>
    <property type="match status" value="1"/>
</dbReference>
<dbReference type="PROSITE" id="PS00041">
    <property type="entry name" value="HTH_ARAC_FAMILY_1"/>
    <property type="match status" value="1"/>
</dbReference>
<dbReference type="PROSITE" id="PS01124">
    <property type="entry name" value="HTH_ARAC_FAMILY_2"/>
    <property type="match status" value="1"/>
</dbReference>
<evidence type="ECO:0000255" key="1">
    <source>
        <dbReference type="HAMAP-Rule" id="MF_01534"/>
    </source>
</evidence>